<protein>
    <recommendedName>
        <fullName>Neurotensin receptor type 1</fullName>
        <shortName>NT-R-1</shortName>
        <shortName>NTR1</shortName>
    </recommendedName>
</protein>
<gene>
    <name type="primary">Ntsr1</name>
    <name type="synonym">Ntsr</name>
</gene>
<proteinExistence type="evidence at protein level"/>
<comment type="function">
    <text evidence="3">G-protein coupled receptor for the tridecapeptide neurotensin (NTS). Signaling is effected via G proteins that activate a phosphatidylinositol-calcium second messenger system. Signaling leads to the activation of downstream MAP kinases and protects cells against apoptosis.</text>
</comment>
<comment type="subunit">
    <text evidence="3">Interacts (palmitoylated form) with GNA11.</text>
</comment>
<comment type="subcellular location">
    <subcellularLocation>
        <location evidence="3">Cell membrane</location>
        <topology evidence="3">Multi-pass membrane protein</topology>
    </subcellularLocation>
    <subcellularLocation>
        <location evidence="3">Membrane raft</location>
    </subcellularLocation>
    <text evidence="3">Palmitoylation is required for localization at CAV1-enriched membrane rafts.</text>
</comment>
<comment type="domain">
    <text evidence="2">The ligand binding pocket consists mainly of extracellular loops ECL2 and ECL3, as well as transmembrane regions TM6 and TM7.</text>
</comment>
<comment type="PTM">
    <text evidence="3">N-glycosylated.</text>
</comment>
<comment type="PTM">
    <text evidence="3">Palmitoylated; this is required for normal localization at membrane rafts and normal GNA11-mediated activation of down-stream signaling cascades. The palmitoylation level increases in response to neurotensin treatment.</text>
</comment>
<comment type="similarity">
    <text evidence="5">Belongs to the G-protein coupled receptor 1 family. Neurotensin receptor subfamily. NTSR1 sub-subfamily.</text>
</comment>
<reference key="1">
    <citation type="submission" date="1998-08" db="EMBL/GenBank/DDBJ databases">
        <title>Neurotensin receptor type 1.</title>
        <authorList>
            <person name="Snider J."/>
            <person name="Sano H."/>
            <person name="Ohta M."/>
        </authorList>
    </citation>
    <scope>NUCLEOTIDE SEQUENCE [MRNA]</scope>
    <source>
        <tissue>Brain</tissue>
    </source>
</reference>
<reference key="2">
    <citation type="journal article" date="2010" name="Cell">
        <title>A tissue-specific atlas of mouse protein phosphorylation and expression.</title>
        <authorList>
            <person name="Huttlin E.L."/>
            <person name="Jedrychowski M.P."/>
            <person name="Elias J.E."/>
            <person name="Goswami T."/>
            <person name="Rad R."/>
            <person name="Beausoleil S.A."/>
            <person name="Villen J."/>
            <person name="Haas W."/>
            <person name="Sowa M.E."/>
            <person name="Gygi S.P."/>
        </authorList>
    </citation>
    <scope>IDENTIFICATION BY MASS SPECTROMETRY [LARGE SCALE ANALYSIS]</scope>
    <source>
        <tissue>Brain</tissue>
    </source>
</reference>
<evidence type="ECO:0000250" key="1"/>
<evidence type="ECO:0000250" key="2">
    <source>
        <dbReference type="UniProtKB" id="P20789"/>
    </source>
</evidence>
<evidence type="ECO:0000250" key="3">
    <source>
        <dbReference type="UniProtKB" id="P30989"/>
    </source>
</evidence>
<evidence type="ECO:0000255" key="4"/>
<evidence type="ECO:0000255" key="5">
    <source>
        <dbReference type="PROSITE-ProRule" id="PRU00521"/>
    </source>
</evidence>
<evidence type="ECO:0000256" key="6">
    <source>
        <dbReference type="SAM" id="MobiDB-lite"/>
    </source>
</evidence>
<sequence length="424" mass="47217">MHLNSSVQQGAPSEPGAQPFPHPQFGLETMLLALSLSNGSGNSSESILEPNSNLDVNTDIYSKVLVTAVYLALFVVGTVGNSVTAFTLARKKSLQSLQSTVHYHLGSLALSDLLILLLAMPVELYNFIWVHHPWAFGDAGCRGYYFLRDACTYATALNVASLSVERYLAICHPFKAKTLMSRSRTKKFISAIWLASALLAVPMLFTMGLQNRSADGQHPGGLVCTPTVDTATVKVVIQVNTFMSFLFPMLIISILNTVIANKLTVMVHQAAEQGRGVCTVGTHNSLEHSTFNMSIEPGRVQALRHGVLVLRAVVIAFVVCWLPYHVRRLMFCYISDEQWTTFLFDFYHYFYMLTNALFYVSSAINPILYNLVSANFRQVFLSTLACLCPGWRRRRKKRPTFSRKPNSMSSNHAFSTSATRETLY</sequence>
<organism>
    <name type="scientific">Mus musculus</name>
    <name type="common">Mouse</name>
    <dbReference type="NCBI Taxonomy" id="10090"/>
    <lineage>
        <taxon>Eukaryota</taxon>
        <taxon>Metazoa</taxon>
        <taxon>Chordata</taxon>
        <taxon>Craniata</taxon>
        <taxon>Vertebrata</taxon>
        <taxon>Euteleostomi</taxon>
        <taxon>Mammalia</taxon>
        <taxon>Eutheria</taxon>
        <taxon>Euarchontoglires</taxon>
        <taxon>Glires</taxon>
        <taxon>Rodentia</taxon>
        <taxon>Myomorpha</taxon>
        <taxon>Muroidea</taxon>
        <taxon>Muridae</taxon>
        <taxon>Murinae</taxon>
        <taxon>Mus</taxon>
        <taxon>Mus</taxon>
    </lineage>
</organism>
<name>NTR1_MOUSE</name>
<dbReference type="EMBL" id="AB017027">
    <property type="protein sequence ID" value="BAA33013.1"/>
    <property type="molecule type" value="mRNA"/>
</dbReference>
<dbReference type="CCDS" id="CCDS17177.1"/>
<dbReference type="RefSeq" id="NP_061236.1">
    <property type="nucleotide sequence ID" value="NM_018766.2"/>
</dbReference>
<dbReference type="SMR" id="O88319"/>
<dbReference type="CORUM" id="O88319"/>
<dbReference type="FunCoup" id="O88319">
    <property type="interactions" value="769"/>
</dbReference>
<dbReference type="STRING" id="10090.ENSMUSP00000029084"/>
<dbReference type="BindingDB" id="O88319"/>
<dbReference type="ChEMBL" id="CHEMBL3570"/>
<dbReference type="GuidetoPHARMACOLOGY" id="309"/>
<dbReference type="GlyCosmos" id="O88319">
    <property type="glycosylation" value="4 sites, No reported glycans"/>
</dbReference>
<dbReference type="GlyGen" id="O88319">
    <property type="glycosylation" value="4 sites"/>
</dbReference>
<dbReference type="iPTMnet" id="O88319"/>
<dbReference type="PhosphoSitePlus" id="O88319"/>
<dbReference type="PaxDb" id="10090-ENSMUSP00000029084"/>
<dbReference type="ProteomicsDB" id="291919"/>
<dbReference type="Antibodypedia" id="1519">
    <property type="antibodies" value="331 antibodies from 32 providers"/>
</dbReference>
<dbReference type="DNASU" id="18216"/>
<dbReference type="Ensembl" id="ENSMUST00000029084.9">
    <property type="protein sequence ID" value="ENSMUSP00000029084.3"/>
    <property type="gene ID" value="ENSMUSG00000027568.10"/>
</dbReference>
<dbReference type="Ensembl" id="ENSMUST00000170448.2">
    <property type="protein sequence ID" value="ENSMUSP00000127548.2"/>
    <property type="gene ID" value="ENSMUSG00000027568.10"/>
</dbReference>
<dbReference type="GeneID" id="18216"/>
<dbReference type="KEGG" id="mmu:18216"/>
<dbReference type="UCSC" id="uc008ojg.1">
    <property type="organism name" value="mouse"/>
</dbReference>
<dbReference type="AGR" id="MGI:97386"/>
<dbReference type="CTD" id="4923"/>
<dbReference type="MGI" id="MGI:97386">
    <property type="gene designation" value="Ntsr1"/>
</dbReference>
<dbReference type="VEuPathDB" id="HostDB:ENSMUSG00000027568"/>
<dbReference type="eggNOG" id="KOG3656">
    <property type="taxonomic scope" value="Eukaryota"/>
</dbReference>
<dbReference type="GeneTree" id="ENSGT01120000271823"/>
<dbReference type="HOGENOM" id="CLU_009579_6_5_1"/>
<dbReference type="InParanoid" id="O88319"/>
<dbReference type="OMA" id="CLCPLWG"/>
<dbReference type="OrthoDB" id="9835116at2759"/>
<dbReference type="PhylomeDB" id="O88319"/>
<dbReference type="TreeFam" id="TF337167"/>
<dbReference type="Reactome" id="R-MMU-375276">
    <property type="pathway name" value="Peptide ligand-binding receptors"/>
</dbReference>
<dbReference type="Reactome" id="R-MMU-416476">
    <property type="pathway name" value="G alpha (q) signalling events"/>
</dbReference>
<dbReference type="BioGRID-ORCS" id="18216">
    <property type="hits" value="3 hits in 77 CRISPR screens"/>
</dbReference>
<dbReference type="PRO" id="PR:O88319"/>
<dbReference type="Proteomes" id="UP000000589">
    <property type="component" value="Chromosome 2"/>
</dbReference>
<dbReference type="RNAct" id="O88319">
    <property type="molecule type" value="protein"/>
</dbReference>
<dbReference type="Bgee" id="ENSMUSG00000027568">
    <property type="expression patterns" value="Expressed in barrel cortex and 63 other cell types or tissues"/>
</dbReference>
<dbReference type="ExpressionAtlas" id="O88319">
    <property type="expression patterns" value="baseline and differential"/>
</dbReference>
<dbReference type="GO" id="GO:0009986">
    <property type="term" value="C:cell surface"/>
    <property type="evidence" value="ECO:0007669"/>
    <property type="project" value="Ensembl"/>
</dbReference>
<dbReference type="GO" id="GO:0009898">
    <property type="term" value="C:cytoplasmic side of plasma membrane"/>
    <property type="evidence" value="ECO:0007669"/>
    <property type="project" value="Ensembl"/>
</dbReference>
<dbReference type="GO" id="GO:0043198">
    <property type="term" value="C:dendritic shaft"/>
    <property type="evidence" value="ECO:0007669"/>
    <property type="project" value="Ensembl"/>
</dbReference>
<dbReference type="GO" id="GO:0043197">
    <property type="term" value="C:dendritic spine"/>
    <property type="evidence" value="ECO:0007669"/>
    <property type="project" value="Ensembl"/>
</dbReference>
<dbReference type="GO" id="GO:0045121">
    <property type="term" value="C:membrane raft"/>
    <property type="evidence" value="ECO:0000250"/>
    <property type="project" value="UniProtKB"/>
</dbReference>
<dbReference type="GO" id="GO:0043204">
    <property type="term" value="C:perikaryon"/>
    <property type="evidence" value="ECO:0007669"/>
    <property type="project" value="Ensembl"/>
</dbReference>
<dbReference type="GO" id="GO:0005886">
    <property type="term" value="C:plasma membrane"/>
    <property type="evidence" value="ECO:0000250"/>
    <property type="project" value="UniProtKB"/>
</dbReference>
<dbReference type="GO" id="GO:0032280">
    <property type="term" value="C:symmetric synapse"/>
    <property type="evidence" value="ECO:0007669"/>
    <property type="project" value="Ensembl"/>
</dbReference>
<dbReference type="GO" id="GO:0043195">
    <property type="term" value="C:terminal bouton"/>
    <property type="evidence" value="ECO:0007669"/>
    <property type="project" value="Ensembl"/>
</dbReference>
<dbReference type="GO" id="GO:0016492">
    <property type="term" value="F:G protein-coupled neurotensin receptor activity"/>
    <property type="evidence" value="ECO:0000250"/>
    <property type="project" value="UniProtKB"/>
</dbReference>
<dbReference type="GO" id="GO:0042802">
    <property type="term" value="F:identical protein binding"/>
    <property type="evidence" value="ECO:0007669"/>
    <property type="project" value="Ensembl"/>
</dbReference>
<dbReference type="GO" id="GO:0008188">
    <property type="term" value="F:neuropeptide receptor activity"/>
    <property type="evidence" value="ECO:0000304"/>
    <property type="project" value="MGI"/>
</dbReference>
<dbReference type="GO" id="GO:0044877">
    <property type="term" value="F:protein-containing complex binding"/>
    <property type="evidence" value="ECO:0007669"/>
    <property type="project" value="Ensembl"/>
</dbReference>
<dbReference type="GO" id="GO:0008344">
    <property type="term" value="P:adult locomotory behavior"/>
    <property type="evidence" value="ECO:0000316"/>
    <property type="project" value="MGI"/>
</dbReference>
<dbReference type="GO" id="GO:0070779">
    <property type="term" value="P:D-aspartate import across plasma membrane"/>
    <property type="evidence" value="ECO:0007669"/>
    <property type="project" value="Ensembl"/>
</dbReference>
<dbReference type="GO" id="GO:0050965">
    <property type="term" value="P:detection of temperature stimulus involved in sensory perception of pain"/>
    <property type="evidence" value="ECO:0007669"/>
    <property type="project" value="Ensembl"/>
</dbReference>
<dbReference type="GO" id="GO:0071545">
    <property type="term" value="P:inositol phosphate catabolic process"/>
    <property type="evidence" value="ECO:0007669"/>
    <property type="project" value="Ensembl"/>
</dbReference>
<dbReference type="GO" id="GO:0098712">
    <property type="term" value="P:L-glutamate import across plasma membrane"/>
    <property type="evidence" value="ECO:0007669"/>
    <property type="project" value="Ensembl"/>
</dbReference>
<dbReference type="GO" id="GO:0007612">
    <property type="term" value="P:learning"/>
    <property type="evidence" value="ECO:0007669"/>
    <property type="project" value="Ensembl"/>
</dbReference>
<dbReference type="GO" id="GO:0043066">
    <property type="term" value="P:negative regulation of apoptotic process"/>
    <property type="evidence" value="ECO:0000250"/>
    <property type="project" value="UniProtKB"/>
</dbReference>
<dbReference type="GO" id="GO:0051280">
    <property type="term" value="P:negative regulation of release of sequestered calcium ion into cytosol"/>
    <property type="evidence" value="ECO:0007669"/>
    <property type="project" value="Ensembl"/>
</dbReference>
<dbReference type="GO" id="GO:0003085">
    <property type="term" value="P:negative regulation of systemic arterial blood pressure"/>
    <property type="evidence" value="ECO:0007669"/>
    <property type="project" value="Ensembl"/>
</dbReference>
<dbReference type="GO" id="GO:0043065">
    <property type="term" value="P:positive regulation of apoptotic process"/>
    <property type="evidence" value="ECO:0007669"/>
    <property type="project" value="Ensembl"/>
</dbReference>
<dbReference type="GO" id="GO:0090238">
    <property type="term" value="P:positive regulation of arachidonate secretion"/>
    <property type="evidence" value="ECO:0007669"/>
    <property type="project" value="Ensembl"/>
</dbReference>
<dbReference type="GO" id="GO:0014054">
    <property type="term" value="P:positive regulation of gamma-aminobutyric acid secretion"/>
    <property type="evidence" value="ECO:0007669"/>
    <property type="project" value="Ensembl"/>
</dbReference>
<dbReference type="GO" id="GO:0010628">
    <property type="term" value="P:positive regulation of gene expression"/>
    <property type="evidence" value="ECO:0007669"/>
    <property type="project" value="Ensembl"/>
</dbReference>
<dbReference type="GO" id="GO:0014049">
    <property type="term" value="P:positive regulation of glutamate secretion"/>
    <property type="evidence" value="ECO:0007669"/>
    <property type="project" value="Ensembl"/>
</dbReference>
<dbReference type="GO" id="GO:0097151">
    <property type="term" value="P:positive regulation of inhibitory postsynaptic potential"/>
    <property type="evidence" value="ECO:0007669"/>
    <property type="project" value="Ensembl"/>
</dbReference>
<dbReference type="GO" id="GO:0060732">
    <property type="term" value="P:positive regulation of inositol phosphate biosynthetic process"/>
    <property type="evidence" value="ECO:0007669"/>
    <property type="project" value="Ensembl"/>
</dbReference>
<dbReference type="GO" id="GO:0051281">
    <property type="term" value="P:positive regulation of release of sequestered calcium ion into cytosol"/>
    <property type="evidence" value="ECO:0007669"/>
    <property type="project" value="Ensembl"/>
</dbReference>
<dbReference type="GO" id="GO:0003254">
    <property type="term" value="P:regulation of membrane depolarization"/>
    <property type="evidence" value="ECO:0007669"/>
    <property type="project" value="Ensembl"/>
</dbReference>
<dbReference type="GO" id="GO:0043576">
    <property type="term" value="P:regulation of respiratory gaseous exchange"/>
    <property type="evidence" value="ECO:0007669"/>
    <property type="project" value="Ensembl"/>
</dbReference>
<dbReference type="GO" id="GO:0033993">
    <property type="term" value="P:response to lipid"/>
    <property type="evidence" value="ECO:0007669"/>
    <property type="project" value="Ensembl"/>
</dbReference>
<dbReference type="GO" id="GO:0001659">
    <property type="term" value="P:temperature homeostasis"/>
    <property type="evidence" value="ECO:0007669"/>
    <property type="project" value="Ensembl"/>
</dbReference>
<dbReference type="CDD" id="cd15355">
    <property type="entry name" value="7tmA_NTSR1"/>
    <property type="match status" value="1"/>
</dbReference>
<dbReference type="FunFam" id="1.20.1070.10:FF:000217">
    <property type="entry name" value="neurotensin receptor type 1"/>
    <property type="match status" value="1"/>
</dbReference>
<dbReference type="Gene3D" id="1.20.1070.10">
    <property type="entry name" value="Rhodopsin 7-helix transmembrane proteins"/>
    <property type="match status" value="1"/>
</dbReference>
<dbReference type="InterPro" id="IPR000276">
    <property type="entry name" value="GPCR_Rhodpsn"/>
</dbReference>
<dbReference type="InterPro" id="IPR017452">
    <property type="entry name" value="GPCR_Rhodpsn_7TM"/>
</dbReference>
<dbReference type="InterPro" id="IPR003985">
    <property type="entry name" value="NT1_rcpt"/>
</dbReference>
<dbReference type="InterPro" id="IPR003984">
    <property type="entry name" value="NT_rcpt"/>
</dbReference>
<dbReference type="PANTHER" id="PTHR24243">
    <property type="entry name" value="G-PROTEIN COUPLED RECEPTOR"/>
    <property type="match status" value="1"/>
</dbReference>
<dbReference type="PANTHER" id="PTHR24243:SF9">
    <property type="entry name" value="NEUROTENSIN RECEPTOR TYPE 1"/>
    <property type="match status" value="1"/>
</dbReference>
<dbReference type="Pfam" id="PF00001">
    <property type="entry name" value="7tm_1"/>
    <property type="match status" value="1"/>
</dbReference>
<dbReference type="PRINTS" id="PR00237">
    <property type="entry name" value="GPCRRHODOPSN"/>
</dbReference>
<dbReference type="PRINTS" id="PR01479">
    <property type="entry name" value="NEUROTENSINR"/>
</dbReference>
<dbReference type="PRINTS" id="PR01480">
    <property type="entry name" value="NEUROTENSN1R"/>
</dbReference>
<dbReference type="SUPFAM" id="SSF81321">
    <property type="entry name" value="Family A G protein-coupled receptor-like"/>
    <property type="match status" value="1"/>
</dbReference>
<dbReference type="PROSITE" id="PS00237">
    <property type="entry name" value="G_PROTEIN_RECEP_F1_1"/>
    <property type="match status" value="1"/>
</dbReference>
<dbReference type="PROSITE" id="PS50262">
    <property type="entry name" value="G_PROTEIN_RECEP_F1_2"/>
    <property type="match status" value="1"/>
</dbReference>
<feature type="chain" id="PRO_0000069947" description="Neurotensin receptor type 1">
    <location>
        <begin position="1"/>
        <end position="424"/>
    </location>
</feature>
<feature type="topological domain" description="Extracellular" evidence="2">
    <location>
        <begin position="1"/>
        <end position="67"/>
    </location>
</feature>
<feature type="transmembrane region" description="Helical; Name=1" evidence="2">
    <location>
        <begin position="68"/>
        <end position="88"/>
    </location>
</feature>
<feature type="topological domain" description="Cytoplasmic" evidence="2">
    <location>
        <begin position="89"/>
        <end position="102"/>
    </location>
</feature>
<feature type="transmembrane region" description="Helical; Name=2" evidence="2">
    <location>
        <begin position="103"/>
        <end position="122"/>
    </location>
</feature>
<feature type="topological domain" description="Extracellular" evidence="2">
    <location>
        <begin position="123"/>
        <end position="142"/>
    </location>
</feature>
<feature type="transmembrane region" description="Helical; Name=3" evidence="2">
    <location>
        <begin position="143"/>
        <end position="164"/>
    </location>
</feature>
<feature type="topological domain" description="Cytoplasmic" evidence="2">
    <location>
        <begin position="165"/>
        <end position="184"/>
    </location>
</feature>
<feature type="transmembrane region" description="Helical; Name=4" evidence="2">
    <location>
        <begin position="185"/>
        <end position="205"/>
    </location>
</feature>
<feature type="topological domain" description="Extracellular" evidence="2">
    <location>
        <begin position="206"/>
        <end position="234"/>
    </location>
</feature>
<feature type="transmembrane region" description="Helical; Name=5" evidence="2">
    <location>
        <begin position="235"/>
        <end position="259"/>
    </location>
</feature>
<feature type="topological domain" description="Cytoplasmic" evidence="2">
    <location>
        <begin position="260"/>
        <end position="308"/>
    </location>
</feature>
<feature type="transmembrane region" description="Helical; Name=6" evidence="2">
    <location>
        <begin position="309"/>
        <end position="330"/>
    </location>
</feature>
<feature type="topological domain" description="Extracellular" evidence="2">
    <location>
        <begin position="331"/>
        <end position="348"/>
    </location>
</feature>
<feature type="transmembrane region" description="Helical; Name=7" evidence="2">
    <location>
        <begin position="349"/>
        <end position="369"/>
    </location>
</feature>
<feature type="topological domain" description="Cytoplasmic" evidence="2">
    <location>
        <begin position="370"/>
        <end position="424"/>
    </location>
</feature>
<feature type="region of interest" description="Neurotensin binding" evidence="1">
    <location>
        <begin position="326"/>
        <end position="349"/>
    </location>
</feature>
<feature type="region of interest" description="Disordered" evidence="6">
    <location>
        <begin position="398"/>
        <end position="424"/>
    </location>
</feature>
<feature type="compositionally biased region" description="Polar residues" evidence="6">
    <location>
        <begin position="403"/>
        <end position="424"/>
    </location>
</feature>
<feature type="lipid moiety-binding region" description="S-palmitoyl cysteine" evidence="3">
    <location>
        <position position="386"/>
    </location>
</feature>
<feature type="lipid moiety-binding region" description="S-palmitoyl cysteine" evidence="3">
    <location>
        <position position="388"/>
    </location>
</feature>
<feature type="glycosylation site" description="N-linked (GlcNAc...) asparagine" evidence="4">
    <location>
        <position position="4"/>
    </location>
</feature>
<feature type="glycosylation site" description="N-linked (GlcNAc...) asparagine" evidence="4">
    <location>
        <position position="38"/>
    </location>
</feature>
<feature type="glycosylation site" description="N-linked (GlcNAc...) asparagine" evidence="4">
    <location>
        <position position="42"/>
    </location>
</feature>
<feature type="glycosylation site" description="N-linked (GlcNAc...) asparagine" evidence="4">
    <location>
        <position position="211"/>
    </location>
</feature>
<feature type="disulfide bond" evidence="5">
    <location>
        <begin position="141"/>
        <end position="224"/>
    </location>
</feature>
<keyword id="KW-1003">Cell membrane</keyword>
<keyword id="KW-1015">Disulfide bond</keyword>
<keyword id="KW-0297">G-protein coupled receptor</keyword>
<keyword id="KW-0325">Glycoprotein</keyword>
<keyword id="KW-0449">Lipoprotein</keyword>
<keyword id="KW-0472">Membrane</keyword>
<keyword id="KW-0564">Palmitate</keyword>
<keyword id="KW-0675">Receptor</keyword>
<keyword id="KW-1185">Reference proteome</keyword>
<keyword id="KW-0807">Transducer</keyword>
<keyword id="KW-0812">Transmembrane</keyword>
<keyword id="KW-1133">Transmembrane helix</keyword>
<accession>O88319</accession>